<evidence type="ECO:0000255" key="1"/>
<evidence type="ECO:0000255" key="2">
    <source>
        <dbReference type="PROSITE-ProRule" id="PRU10044"/>
    </source>
</evidence>
<evidence type="ECO:0000305" key="3"/>
<reference key="1">
    <citation type="journal article" date="2006" name="Nat. Biotechnol.">
        <title>Genome sequence of the bioplastic-producing 'Knallgas' bacterium Ralstonia eutropha H16.</title>
        <authorList>
            <person name="Pohlmann A."/>
            <person name="Fricke W.F."/>
            <person name="Reinecke F."/>
            <person name="Kusian B."/>
            <person name="Liesegang H."/>
            <person name="Cramm R."/>
            <person name="Eitinger T."/>
            <person name="Ewering C."/>
            <person name="Poetter M."/>
            <person name="Schwartz E."/>
            <person name="Strittmatter A."/>
            <person name="Voss I."/>
            <person name="Gottschalk G."/>
            <person name="Steinbuechel A."/>
            <person name="Friedrich B."/>
            <person name="Bowien B."/>
        </authorList>
    </citation>
    <scope>NUCLEOTIDE SEQUENCE [LARGE SCALE GENOMIC DNA]</scope>
    <source>
        <strain>ATCC 17699 / DSM 428 / KCTC 22496 / NCIMB 10442 / H16 / Stanier 337</strain>
    </source>
</reference>
<reference key="2">
    <citation type="journal article" date="1993" name="FEMS Microbiol. Lett.">
        <title>The Alcaligenes eutrophus ldh structural gene encodes a novel type of lactate dehydrogenase.</title>
        <authorList>
            <person name="Jendrossek D."/>
            <person name="Kratzin H.D."/>
            <person name="Steinbuechel A."/>
        </authorList>
    </citation>
    <scope>NUCLEOTIDE SEQUENCE [GENOMIC DNA] OF 1-77</scope>
</reference>
<feature type="signal peptide" evidence="1">
    <location>
        <begin position="1"/>
        <end position="15"/>
    </location>
</feature>
<feature type="chain" id="PRO_0000066290" description="Putative tyrosine-protein phosphatase H16_A0669">
    <location>
        <begin position="16"/>
        <end position="273"/>
    </location>
</feature>
<feature type="active site" description="Phosphocysteine intermediate" evidence="2">
    <location>
        <position position="169"/>
    </location>
</feature>
<protein>
    <recommendedName>
        <fullName>Putative tyrosine-protein phosphatase H16_A0669</fullName>
        <ecNumber>3.1.3.48</ecNumber>
    </recommendedName>
</protein>
<sequence length="273" mass="29325">MIKWLQRAGCLSAHAVVPQAPAAASVQGRHDLAFDTISNARDLGGLAGAGGRRVRQGRLYRSGNPALASAADLERLQTLGLDMVVDFRSPGEKSPEEAAFGQRFHWVAAPVLEGSMAMDVLMPRLRASTPAQMDAFMLEVYGDFPVRYREAFAGFMRTAQGGKTLLFHCTAGKDRTGFAALLLLAALGVAQDDILANYLESNQRNAQFNQTALARMAGLGVAPAVMTPLLEVRASYLDASMRAIDAGWGSVDNYLRDALEVDVAQLRGHYLAG</sequence>
<dbReference type="EC" id="3.1.3.48"/>
<dbReference type="EMBL" id="AM260479">
    <property type="protein sequence ID" value="CAJ91817.1"/>
    <property type="molecule type" value="Genomic_DNA"/>
</dbReference>
<dbReference type="EMBL" id="Z22737">
    <property type="status" value="NOT_ANNOTATED_CDS"/>
    <property type="molecule type" value="Genomic_DNA"/>
</dbReference>
<dbReference type="RefSeq" id="WP_010811527.1">
    <property type="nucleotide sequence ID" value="NZ_CP039287.1"/>
</dbReference>
<dbReference type="SMR" id="P40289"/>
<dbReference type="STRING" id="381666.H16_A0669"/>
<dbReference type="KEGG" id="reh:H16_A0669"/>
<dbReference type="eggNOG" id="COG2365">
    <property type="taxonomic scope" value="Bacteria"/>
</dbReference>
<dbReference type="HOGENOM" id="CLU_057546_0_0_4"/>
<dbReference type="OrthoDB" id="1188001at2"/>
<dbReference type="Proteomes" id="UP000008210">
    <property type="component" value="Chromosome 1"/>
</dbReference>
<dbReference type="GO" id="GO:0004725">
    <property type="term" value="F:protein tyrosine phosphatase activity"/>
    <property type="evidence" value="ECO:0007669"/>
    <property type="project" value="UniProtKB-EC"/>
</dbReference>
<dbReference type="Gene3D" id="3.90.190.10">
    <property type="entry name" value="Protein tyrosine phosphatase superfamily"/>
    <property type="match status" value="1"/>
</dbReference>
<dbReference type="InterPro" id="IPR029021">
    <property type="entry name" value="Prot-tyrosine_phosphatase-like"/>
</dbReference>
<dbReference type="InterPro" id="IPR026893">
    <property type="entry name" value="Tyr/Ser_Pase_IphP-type"/>
</dbReference>
<dbReference type="InterPro" id="IPR016130">
    <property type="entry name" value="Tyr_Pase_AS"/>
</dbReference>
<dbReference type="InterPro" id="IPR000387">
    <property type="entry name" value="Tyr_Pase_dom"/>
</dbReference>
<dbReference type="PANTHER" id="PTHR31126:SF1">
    <property type="entry name" value="TYROSINE SPECIFIC PROTEIN PHOSPHATASES DOMAIN-CONTAINING PROTEIN"/>
    <property type="match status" value="1"/>
</dbReference>
<dbReference type="PANTHER" id="PTHR31126">
    <property type="entry name" value="TYROSINE-PROTEIN PHOSPHATASE"/>
    <property type="match status" value="1"/>
</dbReference>
<dbReference type="Pfam" id="PF13350">
    <property type="entry name" value="Y_phosphatase3"/>
    <property type="match status" value="1"/>
</dbReference>
<dbReference type="SUPFAM" id="SSF52799">
    <property type="entry name" value="(Phosphotyrosine protein) phosphatases II"/>
    <property type="match status" value="1"/>
</dbReference>
<dbReference type="PROSITE" id="PS00383">
    <property type="entry name" value="TYR_PHOSPHATASE_1"/>
    <property type="match status" value="1"/>
</dbReference>
<dbReference type="PROSITE" id="PS50056">
    <property type="entry name" value="TYR_PHOSPHATASE_2"/>
    <property type="match status" value="1"/>
</dbReference>
<keyword id="KW-0378">Hydrolase</keyword>
<keyword id="KW-0904">Protein phosphatase</keyword>
<keyword id="KW-1185">Reference proteome</keyword>
<keyword id="KW-0732">Signal</keyword>
<organism>
    <name type="scientific">Cupriavidus necator (strain ATCC 17699 / DSM 428 / KCTC 22496 / NCIMB 10442 / H16 / Stanier 337)</name>
    <name type="common">Ralstonia eutropha</name>
    <dbReference type="NCBI Taxonomy" id="381666"/>
    <lineage>
        <taxon>Bacteria</taxon>
        <taxon>Pseudomonadati</taxon>
        <taxon>Pseudomonadota</taxon>
        <taxon>Betaproteobacteria</taxon>
        <taxon>Burkholderiales</taxon>
        <taxon>Burkholderiaceae</taxon>
        <taxon>Cupriavidus</taxon>
    </lineage>
</organism>
<comment type="catalytic activity">
    <reaction evidence="2">
        <text>O-phospho-L-tyrosyl-[protein] + H2O = L-tyrosyl-[protein] + phosphate</text>
        <dbReference type="Rhea" id="RHEA:10684"/>
        <dbReference type="Rhea" id="RHEA-COMP:10136"/>
        <dbReference type="Rhea" id="RHEA-COMP:20101"/>
        <dbReference type="ChEBI" id="CHEBI:15377"/>
        <dbReference type="ChEBI" id="CHEBI:43474"/>
        <dbReference type="ChEBI" id="CHEBI:46858"/>
        <dbReference type="ChEBI" id="CHEBI:61978"/>
        <dbReference type="EC" id="3.1.3.48"/>
    </reaction>
</comment>
<comment type="similarity">
    <text evidence="3">Belongs to the protein-tyrosine phosphatase family.</text>
</comment>
<proteinExistence type="inferred from homology"/>
<gene>
    <name type="ordered locus">H16_A0669</name>
</gene>
<accession>P40289</accession>
<accession>Q0KDV4</accession>
<name>Y669_CUPNH</name>